<feature type="chain" id="PRO_1000128781" description="Large ribosomal subunit protein bL27">
    <location>
        <begin position="1"/>
        <end position="89"/>
    </location>
</feature>
<reference key="1">
    <citation type="journal article" date="2008" name="J. Bacteriol.">
        <title>Genome sequence of the chemolithoautotrophic bacterium Oligotropha carboxidovorans OM5T.</title>
        <authorList>
            <person name="Paul D."/>
            <person name="Bridges S."/>
            <person name="Burgess S.C."/>
            <person name="Dandass Y."/>
            <person name="Lawrence M.L."/>
        </authorList>
    </citation>
    <scope>NUCLEOTIDE SEQUENCE [LARGE SCALE GENOMIC DNA]</scope>
    <source>
        <strain>ATCC 49405 / DSM 1227 / KCTC 32145 / OM5</strain>
    </source>
</reference>
<reference key="2">
    <citation type="journal article" date="2011" name="J. Bacteriol.">
        <title>Complete genome sequences of the chemolithoautotrophic Oligotropha carboxidovorans strains OM4 and OM5.</title>
        <authorList>
            <person name="Volland S."/>
            <person name="Rachinger M."/>
            <person name="Strittmatter A."/>
            <person name="Daniel R."/>
            <person name="Gottschalk G."/>
            <person name="Meyer O."/>
        </authorList>
    </citation>
    <scope>NUCLEOTIDE SEQUENCE [LARGE SCALE GENOMIC DNA]</scope>
    <source>
        <strain>ATCC 49405 / DSM 1227 / KCTC 32145 / OM5</strain>
    </source>
</reference>
<comment type="similarity">
    <text evidence="1">Belongs to the bacterial ribosomal protein bL27 family.</text>
</comment>
<name>RL27_AFIC5</name>
<dbReference type="EMBL" id="CP001196">
    <property type="protein sequence ID" value="ACI91753.1"/>
    <property type="molecule type" value="Genomic_DNA"/>
</dbReference>
<dbReference type="EMBL" id="CP002826">
    <property type="protein sequence ID" value="AEI08009.1"/>
    <property type="molecule type" value="Genomic_DNA"/>
</dbReference>
<dbReference type="RefSeq" id="WP_012561784.1">
    <property type="nucleotide sequence ID" value="NC_015684.1"/>
</dbReference>
<dbReference type="SMR" id="B6JD23"/>
<dbReference type="STRING" id="504832.OCA5_c33350"/>
<dbReference type="KEGG" id="oca:OCAR_4609"/>
<dbReference type="KEGG" id="ocg:OCA5_c33350"/>
<dbReference type="PATRIC" id="fig|504832.7.peg.3505"/>
<dbReference type="eggNOG" id="COG0211">
    <property type="taxonomic scope" value="Bacteria"/>
</dbReference>
<dbReference type="HOGENOM" id="CLU_095424_4_1_5"/>
<dbReference type="OrthoDB" id="9803474at2"/>
<dbReference type="Proteomes" id="UP000007730">
    <property type="component" value="Chromosome"/>
</dbReference>
<dbReference type="GO" id="GO:0022625">
    <property type="term" value="C:cytosolic large ribosomal subunit"/>
    <property type="evidence" value="ECO:0007669"/>
    <property type="project" value="TreeGrafter"/>
</dbReference>
<dbReference type="GO" id="GO:0003735">
    <property type="term" value="F:structural constituent of ribosome"/>
    <property type="evidence" value="ECO:0007669"/>
    <property type="project" value="InterPro"/>
</dbReference>
<dbReference type="GO" id="GO:0006412">
    <property type="term" value="P:translation"/>
    <property type="evidence" value="ECO:0007669"/>
    <property type="project" value="UniProtKB-UniRule"/>
</dbReference>
<dbReference type="FunFam" id="2.40.50.100:FF:000020">
    <property type="entry name" value="50S ribosomal protein L27"/>
    <property type="match status" value="1"/>
</dbReference>
<dbReference type="Gene3D" id="2.40.50.100">
    <property type="match status" value="1"/>
</dbReference>
<dbReference type="HAMAP" id="MF_00539">
    <property type="entry name" value="Ribosomal_bL27"/>
    <property type="match status" value="1"/>
</dbReference>
<dbReference type="InterPro" id="IPR001684">
    <property type="entry name" value="Ribosomal_bL27"/>
</dbReference>
<dbReference type="InterPro" id="IPR018261">
    <property type="entry name" value="Ribosomal_bL27_CS"/>
</dbReference>
<dbReference type="NCBIfam" id="TIGR00062">
    <property type="entry name" value="L27"/>
    <property type="match status" value="1"/>
</dbReference>
<dbReference type="PANTHER" id="PTHR15893:SF0">
    <property type="entry name" value="LARGE RIBOSOMAL SUBUNIT PROTEIN BL27M"/>
    <property type="match status" value="1"/>
</dbReference>
<dbReference type="PANTHER" id="PTHR15893">
    <property type="entry name" value="RIBOSOMAL PROTEIN L27"/>
    <property type="match status" value="1"/>
</dbReference>
<dbReference type="Pfam" id="PF01016">
    <property type="entry name" value="Ribosomal_L27"/>
    <property type="match status" value="1"/>
</dbReference>
<dbReference type="PRINTS" id="PR00063">
    <property type="entry name" value="RIBOSOMALL27"/>
</dbReference>
<dbReference type="SUPFAM" id="SSF110324">
    <property type="entry name" value="Ribosomal L27 protein-like"/>
    <property type="match status" value="1"/>
</dbReference>
<dbReference type="PROSITE" id="PS00831">
    <property type="entry name" value="RIBOSOMAL_L27"/>
    <property type="match status" value="1"/>
</dbReference>
<keyword id="KW-1185">Reference proteome</keyword>
<keyword id="KW-0687">Ribonucleoprotein</keyword>
<keyword id="KW-0689">Ribosomal protein</keyword>
<gene>
    <name evidence="1" type="primary">rpmA</name>
    <name type="ordered locus">OCAR_4609</name>
    <name type="ordered locus">OCA5_c33350</name>
</gene>
<protein>
    <recommendedName>
        <fullName evidence="1">Large ribosomal subunit protein bL27</fullName>
    </recommendedName>
    <alternativeName>
        <fullName evidence="2">50S ribosomal protein L27</fullName>
    </alternativeName>
</protein>
<organism>
    <name type="scientific">Afipia carboxidovorans (strain ATCC 49405 / DSM 1227 / KCTC 32145 / OM5)</name>
    <name type="common">Oligotropha carboxidovorans</name>
    <dbReference type="NCBI Taxonomy" id="504832"/>
    <lineage>
        <taxon>Bacteria</taxon>
        <taxon>Pseudomonadati</taxon>
        <taxon>Pseudomonadota</taxon>
        <taxon>Alphaproteobacteria</taxon>
        <taxon>Hyphomicrobiales</taxon>
        <taxon>Nitrobacteraceae</taxon>
        <taxon>Afipia</taxon>
    </lineage>
</organism>
<sequence>MAHKKAGGSSRNGRDSAGKRLGIKAFGGQIVIPGNIIARQRGTTWHPGLNVGMGTDHTLFAKAEGRVEFRAKTGGRTFVSVIPVAEAAE</sequence>
<proteinExistence type="inferred from homology"/>
<accession>B6JD23</accession>
<accession>F8BTB7</accession>
<evidence type="ECO:0000255" key="1">
    <source>
        <dbReference type="HAMAP-Rule" id="MF_00539"/>
    </source>
</evidence>
<evidence type="ECO:0000305" key="2"/>